<sequence>MGASQSTNGPGQKTTSVEELSKRLAYRFANKCFTPLELTHLKDNFFSRALDQGGIRYWNEEILSEFLGIPDGAGSAAYVTSDGSLDAGPVIFRMVSYLGAFPFQNTMAPSVLTFEAMVKVIVLLTERYGKVLKRGRKDRVKLLFGSLADVGRRDIVVQLQEAAEDSLELIGEAGPGSDRTFTHPTGFSVDKPAHDDDGEEDDDDLALAALESLDAIEIFKHDQRIDKTVYESKISINTFRRLLALLMVTAPLRPLGTISKYTTGLSSSILETVNEQVESILAALALDDLEGGIGYKSFSELISTSLPYLFDPLTPLFEHLLFSKNLDVTRKRHSQSQNDPAAKPVPTPPSTPPSSPPLSPVILNGGFDSSILNPTLLSHLSFFLSTTAQIPNIFRNRTRLHPVFSSTEHGESLTSFSHHVMTWQAPSILLIKGVVTSESDEEQITTIGAYLPQPWKQSSSNSSRRSSDVPDQSTLPCLFELSPVHTVLQGSPSLSSLKPNMPVTYFSTKTGIAIGCQIPPPSRKSLGADFLPKPSGGGSLLIDPALEVATLVISDGLNGEGVFLPPGISAHSASKSVSCTTLAASTASISASNHNTTKSISIYSLEVWGIIPSQSLSAQLDSPGSFVEKQDAITQQRAQWDFEAREAERRKVINMKVGVGELEEHSGRALLEMAGIVGDSQYSGLRHLR</sequence>
<organism>
    <name type="scientific">Paracoccidioides brasiliensis (strain Pb03)</name>
    <dbReference type="NCBI Taxonomy" id="482561"/>
    <lineage>
        <taxon>Eukaryota</taxon>
        <taxon>Fungi</taxon>
        <taxon>Dikarya</taxon>
        <taxon>Ascomycota</taxon>
        <taxon>Pezizomycotina</taxon>
        <taxon>Eurotiomycetes</taxon>
        <taxon>Eurotiomycetidae</taxon>
        <taxon>Onygenales</taxon>
        <taxon>Ajellomycetaceae</taxon>
        <taxon>Paracoccidioides</taxon>
    </lineage>
</organism>
<feature type="chain" id="PRO_0000408836" description="Restriction of telomere capping protein 5">
    <location>
        <begin position="1"/>
        <end position="689"/>
    </location>
</feature>
<feature type="domain" description="TLDc" evidence="2">
    <location>
        <begin position="370"/>
        <end position="611"/>
    </location>
</feature>
<feature type="region of interest" description="Disordered" evidence="3">
    <location>
        <begin position="173"/>
        <end position="201"/>
    </location>
</feature>
<feature type="region of interest" description="Disordered" evidence="3">
    <location>
        <begin position="332"/>
        <end position="359"/>
    </location>
</feature>
<feature type="compositionally biased region" description="Pro residues" evidence="3">
    <location>
        <begin position="343"/>
        <end position="359"/>
    </location>
</feature>
<keyword id="KW-0963">Cytoplasm</keyword>
<gene>
    <name type="primary">RTC5</name>
    <name type="ORF">PABG_00611</name>
</gene>
<accession>C0RYV6</accession>
<evidence type="ECO:0000250" key="1"/>
<evidence type="ECO:0000255" key="2">
    <source>
        <dbReference type="PROSITE-ProRule" id="PRU01234"/>
    </source>
</evidence>
<evidence type="ECO:0000256" key="3">
    <source>
        <dbReference type="SAM" id="MobiDB-lite"/>
    </source>
</evidence>
<evidence type="ECO:0000305" key="4"/>
<reference key="1">
    <citation type="journal article" date="2011" name="PLoS Genet.">
        <title>Comparative genomic analysis of human fungal pathogens causing paracoccidioidomycosis.</title>
        <authorList>
            <person name="Desjardins C.A."/>
            <person name="Champion M.D."/>
            <person name="Holder J.W."/>
            <person name="Muszewska A."/>
            <person name="Goldberg J."/>
            <person name="Bailao A.M."/>
            <person name="Brigido M.M."/>
            <person name="Ferreira M.E."/>
            <person name="Garcia A.M."/>
            <person name="Grynberg M."/>
            <person name="Gujja S."/>
            <person name="Heiman D.I."/>
            <person name="Henn M.R."/>
            <person name="Kodira C.D."/>
            <person name="Leon-Narvaez H."/>
            <person name="Longo L.V.G."/>
            <person name="Ma L.-J."/>
            <person name="Malavazi I."/>
            <person name="Matsuo A.L."/>
            <person name="Morais F.V."/>
            <person name="Pereira M."/>
            <person name="Rodriguez-Brito S."/>
            <person name="Sakthikumar S."/>
            <person name="Salem-Izacc S.M."/>
            <person name="Sykes S.M."/>
            <person name="Teixeira M.M."/>
            <person name="Vallejo M.C."/>
            <person name="Walter M.E."/>
            <person name="Yandava C."/>
            <person name="Young S."/>
            <person name="Zeng Q."/>
            <person name="Zucker J."/>
            <person name="Felipe M.S."/>
            <person name="Goldman G.H."/>
            <person name="Haas B.J."/>
            <person name="McEwen J.G."/>
            <person name="Nino-Vega G."/>
            <person name="Puccia R."/>
            <person name="San-Blas G."/>
            <person name="Soares C.M."/>
            <person name="Birren B.W."/>
            <person name="Cuomo C.A."/>
        </authorList>
    </citation>
    <scope>NUCLEOTIDE SEQUENCE [LARGE SCALE GENOMIC DNA]</scope>
    <source>
        <strain>Pb03</strain>
    </source>
</reference>
<comment type="function">
    <text evidence="1">May be involved in a process influencing telomere capping.</text>
</comment>
<comment type="subcellular location">
    <subcellularLocation>
        <location evidence="1">Cytoplasm</location>
    </subcellularLocation>
</comment>
<comment type="similarity">
    <text evidence="4">Belongs to the RTC5 family.</text>
</comment>
<comment type="sequence caution" evidence="4">
    <conflict type="erroneous gene model prediction">
        <sequence resource="EMBL-CDS" id="EEH18048"/>
    </conflict>
</comment>
<dbReference type="EMBL" id="KN305531">
    <property type="protein sequence ID" value="EEH18048.2"/>
    <property type="status" value="ALT_SEQ"/>
    <property type="molecule type" value="Genomic_DNA"/>
</dbReference>
<dbReference type="HOGENOM" id="CLU_011918_1_0_1"/>
<dbReference type="OrthoDB" id="18773at33183"/>
<dbReference type="GO" id="GO:0005737">
    <property type="term" value="C:cytoplasm"/>
    <property type="evidence" value="ECO:0007669"/>
    <property type="project" value="UniProtKB-SubCell"/>
</dbReference>
<dbReference type="InterPro" id="IPR006571">
    <property type="entry name" value="TLDc_dom"/>
</dbReference>
<dbReference type="Pfam" id="PF07534">
    <property type="entry name" value="TLD"/>
    <property type="match status" value="1"/>
</dbReference>
<dbReference type="SMART" id="SM00584">
    <property type="entry name" value="TLDc"/>
    <property type="match status" value="1"/>
</dbReference>
<dbReference type="PROSITE" id="PS51886">
    <property type="entry name" value="TLDC"/>
    <property type="match status" value="1"/>
</dbReference>
<protein>
    <recommendedName>
        <fullName>Restriction of telomere capping protein 5</fullName>
    </recommendedName>
</protein>
<name>RTC5_PARBP</name>
<proteinExistence type="inferred from homology"/>